<name>RL4_LEPBA</name>
<evidence type="ECO:0000255" key="1">
    <source>
        <dbReference type="HAMAP-Rule" id="MF_01328"/>
    </source>
</evidence>
<evidence type="ECO:0000256" key="2">
    <source>
        <dbReference type="SAM" id="MobiDB-lite"/>
    </source>
</evidence>
<evidence type="ECO:0000305" key="3"/>
<protein>
    <recommendedName>
        <fullName evidence="1">Large ribosomal subunit protein uL4</fullName>
    </recommendedName>
    <alternativeName>
        <fullName evidence="3">50S ribosomal protein L4</fullName>
    </alternativeName>
</protein>
<feature type="chain" id="PRO_1000142142" description="Large ribosomal subunit protein uL4">
    <location>
        <begin position="1"/>
        <end position="211"/>
    </location>
</feature>
<feature type="region of interest" description="Disordered" evidence="2">
    <location>
        <begin position="42"/>
        <end position="73"/>
    </location>
</feature>
<dbReference type="EMBL" id="CP000777">
    <property type="protein sequence ID" value="ABZ94416.1"/>
    <property type="molecule type" value="Genomic_DNA"/>
</dbReference>
<dbReference type="RefSeq" id="WP_012388939.1">
    <property type="nucleotide sequence ID" value="NC_010842.1"/>
</dbReference>
<dbReference type="SMR" id="B0SAF3"/>
<dbReference type="KEGG" id="lbf:LBF_1912"/>
<dbReference type="HOGENOM" id="CLU_041575_5_2_12"/>
<dbReference type="GO" id="GO:1990904">
    <property type="term" value="C:ribonucleoprotein complex"/>
    <property type="evidence" value="ECO:0007669"/>
    <property type="project" value="UniProtKB-KW"/>
</dbReference>
<dbReference type="GO" id="GO:0005840">
    <property type="term" value="C:ribosome"/>
    <property type="evidence" value="ECO:0007669"/>
    <property type="project" value="UniProtKB-KW"/>
</dbReference>
<dbReference type="GO" id="GO:0019843">
    <property type="term" value="F:rRNA binding"/>
    <property type="evidence" value="ECO:0007669"/>
    <property type="project" value="UniProtKB-UniRule"/>
</dbReference>
<dbReference type="GO" id="GO:0003735">
    <property type="term" value="F:structural constituent of ribosome"/>
    <property type="evidence" value="ECO:0007669"/>
    <property type="project" value="InterPro"/>
</dbReference>
<dbReference type="GO" id="GO:0006412">
    <property type="term" value="P:translation"/>
    <property type="evidence" value="ECO:0007669"/>
    <property type="project" value="UniProtKB-UniRule"/>
</dbReference>
<dbReference type="Gene3D" id="3.40.1370.10">
    <property type="match status" value="1"/>
</dbReference>
<dbReference type="HAMAP" id="MF_01328_B">
    <property type="entry name" value="Ribosomal_uL4_B"/>
    <property type="match status" value="1"/>
</dbReference>
<dbReference type="InterPro" id="IPR002136">
    <property type="entry name" value="Ribosomal_uL4"/>
</dbReference>
<dbReference type="InterPro" id="IPR013005">
    <property type="entry name" value="Ribosomal_uL4-like"/>
</dbReference>
<dbReference type="InterPro" id="IPR023574">
    <property type="entry name" value="Ribosomal_uL4_dom_sf"/>
</dbReference>
<dbReference type="NCBIfam" id="TIGR03953">
    <property type="entry name" value="rplD_bact"/>
    <property type="match status" value="1"/>
</dbReference>
<dbReference type="PANTHER" id="PTHR10746">
    <property type="entry name" value="50S RIBOSOMAL PROTEIN L4"/>
    <property type="match status" value="1"/>
</dbReference>
<dbReference type="PANTHER" id="PTHR10746:SF6">
    <property type="entry name" value="LARGE RIBOSOMAL SUBUNIT PROTEIN UL4M"/>
    <property type="match status" value="1"/>
</dbReference>
<dbReference type="Pfam" id="PF00573">
    <property type="entry name" value="Ribosomal_L4"/>
    <property type="match status" value="1"/>
</dbReference>
<dbReference type="SUPFAM" id="SSF52166">
    <property type="entry name" value="Ribosomal protein L4"/>
    <property type="match status" value="1"/>
</dbReference>
<organism>
    <name type="scientific">Leptospira biflexa serovar Patoc (strain Patoc 1 / Ames)</name>
    <dbReference type="NCBI Taxonomy" id="355278"/>
    <lineage>
        <taxon>Bacteria</taxon>
        <taxon>Pseudomonadati</taxon>
        <taxon>Spirochaetota</taxon>
        <taxon>Spirochaetia</taxon>
        <taxon>Leptospirales</taxon>
        <taxon>Leptospiraceae</taxon>
        <taxon>Leptospira</taxon>
    </lineage>
</organism>
<accession>B0SAF3</accession>
<proteinExistence type="inferred from homology"/>
<gene>
    <name evidence="1" type="primary">rplD</name>
    <name type="ordered locus">LBF_1912</name>
</gene>
<comment type="function">
    <text evidence="1">One of the primary rRNA binding proteins, this protein initially binds near the 5'-end of the 23S rRNA. It is important during the early stages of 50S assembly. It makes multiple contacts with different domains of the 23S rRNA in the assembled 50S subunit and ribosome.</text>
</comment>
<comment type="function">
    <text evidence="1">Forms part of the polypeptide exit tunnel.</text>
</comment>
<comment type="subunit">
    <text evidence="1">Part of the 50S ribosomal subunit.</text>
</comment>
<comment type="similarity">
    <text evidence="1">Belongs to the universal ribosomal protein uL4 family.</text>
</comment>
<sequence length="211" mass="23284">MKARKYNKEGVFVSEVELPAELFATGISLGAIYDAVKAENANNRQGTHSTKDRSEVRGGGIKPWAQKGTGRARQGSIRAPHFVGGGIIHGPKPRDYSSNLSRSVKKKAVLSILNKKAEENRIAIIEDVEPSSYSTKSIYNILKNMDIAEKGNVGFVVAGENQFLKKSTRNIENLKYVNSKRVVCRDILYNNNLVISESALKELQAQYSKKG</sequence>
<reference key="1">
    <citation type="journal article" date="2008" name="PLoS ONE">
        <title>Genome sequence of the saprophyte Leptospira biflexa provides insights into the evolution of Leptospira and the pathogenesis of leptospirosis.</title>
        <authorList>
            <person name="Picardeau M."/>
            <person name="Bulach D.M."/>
            <person name="Bouchier C."/>
            <person name="Zuerner R.L."/>
            <person name="Zidane N."/>
            <person name="Wilson P.J."/>
            <person name="Creno S."/>
            <person name="Kuczek E.S."/>
            <person name="Bommezzadri S."/>
            <person name="Davis J.C."/>
            <person name="McGrath A."/>
            <person name="Johnson M.J."/>
            <person name="Boursaux-Eude C."/>
            <person name="Seemann T."/>
            <person name="Rouy Z."/>
            <person name="Coppel R.L."/>
            <person name="Rood J.I."/>
            <person name="Lajus A."/>
            <person name="Davies J.K."/>
            <person name="Medigue C."/>
            <person name="Adler B."/>
        </authorList>
    </citation>
    <scope>NUCLEOTIDE SEQUENCE [LARGE SCALE GENOMIC DNA]</scope>
    <source>
        <strain>Patoc 1 / Ames</strain>
    </source>
</reference>
<keyword id="KW-0687">Ribonucleoprotein</keyword>
<keyword id="KW-0689">Ribosomal protein</keyword>
<keyword id="KW-0694">RNA-binding</keyword>
<keyword id="KW-0699">rRNA-binding</keyword>